<protein>
    <recommendedName>
        <fullName evidence="1">2-dehydro-3-deoxyphosphooctonate aldolase</fullName>
        <ecNumber evidence="1">2.5.1.55</ecNumber>
    </recommendedName>
    <alternativeName>
        <fullName evidence="1">3-deoxy-D-manno-octulosonic acid 8-phosphate synthase</fullName>
    </alternativeName>
    <alternativeName>
        <fullName evidence="1">KDO-8-phosphate synthase</fullName>
        <shortName evidence="1">KDO 8-P synthase</shortName>
        <shortName evidence="1">KDOPS</shortName>
    </alternativeName>
    <alternativeName>
        <fullName evidence="1">Phospho-2-dehydro-3-deoxyoctonate aldolase</fullName>
    </alternativeName>
</protein>
<feature type="chain" id="PRO_0000187125" description="2-dehydro-3-deoxyphosphooctonate aldolase">
    <location>
        <begin position="1"/>
        <end position="284"/>
    </location>
</feature>
<sequence>MKQKVVSIGDINVANDLPFVLFGGMNVLESRDLAMRICEHYVTVTQKLGIPYVFKASFDKANRSSIHSYRGPGLEEGMKIFQELKQTFGVKIITDVHEPSQAQPVADVVDVIQLPAFLARQTDLVEAMAKTGAVINVKKPQFVSPGQMGNIVDKFKEGGNEKVILCDRGANFGYDNLVVDMLGFSIMKKVSGNSPVIFDVTHALQCRDPFGAASGGRRAQVTELARAGMAVGLAGLFIEAHPDPEHAKCDGPSALPLAKLEPFLKQMKAIDDLVKGFEELDTSK</sequence>
<comment type="catalytic activity">
    <reaction evidence="1">
        <text>D-arabinose 5-phosphate + phosphoenolpyruvate + H2O = 3-deoxy-alpha-D-manno-2-octulosonate-8-phosphate + phosphate</text>
        <dbReference type="Rhea" id="RHEA:14053"/>
        <dbReference type="ChEBI" id="CHEBI:15377"/>
        <dbReference type="ChEBI" id="CHEBI:43474"/>
        <dbReference type="ChEBI" id="CHEBI:57693"/>
        <dbReference type="ChEBI" id="CHEBI:58702"/>
        <dbReference type="ChEBI" id="CHEBI:85985"/>
        <dbReference type="EC" id="2.5.1.55"/>
    </reaction>
</comment>
<comment type="pathway">
    <text evidence="1">Carbohydrate biosynthesis; 3-deoxy-D-manno-octulosonate biosynthesis; 3-deoxy-D-manno-octulosonate from D-ribulose 5-phosphate: step 2/3.</text>
</comment>
<comment type="pathway">
    <text evidence="1">Bacterial outer membrane biogenesis; lipopolysaccharide biosynthesis.</text>
</comment>
<comment type="subcellular location">
    <subcellularLocation>
        <location evidence="1">Cytoplasm</location>
    </subcellularLocation>
</comment>
<comment type="similarity">
    <text evidence="1">Belongs to the KdsA family.</text>
</comment>
<keyword id="KW-0963">Cytoplasm</keyword>
<keyword id="KW-0448">Lipopolysaccharide biosynthesis</keyword>
<keyword id="KW-1185">Reference proteome</keyword>
<keyword id="KW-0808">Transferase</keyword>
<name>KDSA_ECOL6</name>
<reference key="1">
    <citation type="journal article" date="2002" name="Proc. Natl. Acad. Sci. U.S.A.">
        <title>Extensive mosaic structure revealed by the complete genome sequence of uropathogenic Escherichia coli.</title>
        <authorList>
            <person name="Welch R.A."/>
            <person name="Burland V."/>
            <person name="Plunkett G. III"/>
            <person name="Redford P."/>
            <person name="Roesch P."/>
            <person name="Rasko D."/>
            <person name="Buckles E.L."/>
            <person name="Liou S.-R."/>
            <person name="Boutin A."/>
            <person name="Hackett J."/>
            <person name="Stroud D."/>
            <person name="Mayhew G.F."/>
            <person name="Rose D.J."/>
            <person name="Zhou S."/>
            <person name="Schwartz D.C."/>
            <person name="Perna N.T."/>
            <person name="Mobley H.L.T."/>
            <person name="Donnenberg M.S."/>
            <person name="Blattner F.R."/>
        </authorList>
    </citation>
    <scope>NUCLEOTIDE SEQUENCE [LARGE SCALE GENOMIC DNA]</scope>
    <source>
        <strain>CFT073 / ATCC 700928 / UPEC</strain>
    </source>
</reference>
<accession>Q8FHZ8</accession>
<organism>
    <name type="scientific">Escherichia coli O6:H1 (strain CFT073 / ATCC 700928 / UPEC)</name>
    <dbReference type="NCBI Taxonomy" id="199310"/>
    <lineage>
        <taxon>Bacteria</taxon>
        <taxon>Pseudomonadati</taxon>
        <taxon>Pseudomonadota</taxon>
        <taxon>Gammaproteobacteria</taxon>
        <taxon>Enterobacterales</taxon>
        <taxon>Enterobacteriaceae</taxon>
        <taxon>Escherichia</taxon>
    </lineage>
</organism>
<proteinExistence type="inferred from homology"/>
<gene>
    <name evidence="1" type="primary">kdsA</name>
    <name type="ordered locus">c1674</name>
</gene>
<evidence type="ECO:0000255" key="1">
    <source>
        <dbReference type="HAMAP-Rule" id="MF_00056"/>
    </source>
</evidence>
<dbReference type="EC" id="2.5.1.55" evidence="1"/>
<dbReference type="EMBL" id="AE014075">
    <property type="protein sequence ID" value="AAN80139.1"/>
    <property type="molecule type" value="Genomic_DNA"/>
</dbReference>
<dbReference type="RefSeq" id="WP_000811069.1">
    <property type="nucleotide sequence ID" value="NC_004431.1"/>
</dbReference>
<dbReference type="SMR" id="Q8FHZ8"/>
<dbReference type="STRING" id="199310.c1674"/>
<dbReference type="KEGG" id="ecc:c1674"/>
<dbReference type="eggNOG" id="COG2877">
    <property type="taxonomic scope" value="Bacteria"/>
</dbReference>
<dbReference type="HOGENOM" id="CLU_036666_0_0_6"/>
<dbReference type="BioCyc" id="ECOL199310:C1674-MONOMER"/>
<dbReference type="UniPathway" id="UPA00030"/>
<dbReference type="UniPathway" id="UPA00357">
    <property type="reaction ID" value="UER00474"/>
</dbReference>
<dbReference type="Proteomes" id="UP000001410">
    <property type="component" value="Chromosome"/>
</dbReference>
<dbReference type="GO" id="GO:0005737">
    <property type="term" value="C:cytoplasm"/>
    <property type="evidence" value="ECO:0007669"/>
    <property type="project" value="UniProtKB-SubCell"/>
</dbReference>
<dbReference type="GO" id="GO:0008676">
    <property type="term" value="F:3-deoxy-8-phosphooctulonate synthase activity"/>
    <property type="evidence" value="ECO:0007669"/>
    <property type="project" value="UniProtKB-UniRule"/>
</dbReference>
<dbReference type="GO" id="GO:0019294">
    <property type="term" value="P:keto-3-deoxy-D-manno-octulosonic acid biosynthetic process"/>
    <property type="evidence" value="ECO:0007669"/>
    <property type="project" value="UniProtKB-UniRule"/>
</dbReference>
<dbReference type="FunFam" id="3.20.20.70:FF:000058">
    <property type="entry name" value="2-dehydro-3-deoxyphosphooctonate aldolase"/>
    <property type="match status" value="1"/>
</dbReference>
<dbReference type="Gene3D" id="3.20.20.70">
    <property type="entry name" value="Aldolase class I"/>
    <property type="match status" value="1"/>
</dbReference>
<dbReference type="HAMAP" id="MF_00056">
    <property type="entry name" value="KDO8P_synth"/>
    <property type="match status" value="1"/>
</dbReference>
<dbReference type="InterPro" id="IPR013785">
    <property type="entry name" value="Aldolase_TIM"/>
</dbReference>
<dbReference type="InterPro" id="IPR006218">
    <property type="entry name" value="DAHP1/KDSA"/>
</dbReference>
<dbReference type="InterPro" id="IPR006269">
    <property type="entry name" value="KDO8P_synthase"/>
</dbReference>
<dbReference type="NCBIfam" id="TIGR01362">
    <property type="entry name" value="KDO8P_synth"/>
    <property type="match status" value="1"/>
</dbReference>
<dbReference type="NCBIfam" id="NF003543">
    <property type="entry name" value="PRK05198.1"/>
    <property type="match status" value="1"/>
</dbReference>
<dbReference type="NCBIfam" id="NF009109">
    <property type="entry name" value="PRK12457.1"/>
    <property type="match status" value="1"/>
</dbReference>
<dbReference type="PANTHER" id="PTHR21057">
    <property type="entry name" value="PHOSPHO-2-DEHYDRO-3-DEOXYHEPTONATE ALDOLASE"/>
    <property type="match status" value="1"/>
</dbReference>
<dbReference type="Pfam" id="PF00793">
    <property type="entry name" value="DAHP_synth_1"/>
    <property type="match status" value="1"/>
</dbReference>
<dbReference type="SUPFAM" id="SSF51569">
    <property type="entry name" value="Aldolase"/>
    <property type="match status" value="1"/>
</dbReference>